<keyword id="KW-0378">Hydrolase</keyword>
<keyword id="KW-0659">Purine metabolism</keyword>
<sequence length="336" mass="37829">MATLHAPAFELPEILNTKTNLADARIGAQVIECSDDFFAEAKRMLQFEAPIFVEDKFDDHGKWMDGWETRRKRHAGYDWCIVKLGVSGKISALDIDTTFFTGNYPASASLEACYAPNGDLTGVTWQSILENTELGPSQHHIFMVNNDAIFTHIRLNIFPDGGVARLRVYGDVHIQVTDHEQTLDLLALENGGRVIAYSDAHFGHPRNLINPGRGVNMGDGWETKRRRAPGYDWCILALGKSGKIEKIEIDTAHFKGNFPAEVSIQAVYLENATDAQLIPQSMFWSYLLEAQPMQMDHIHEYVNEILKHEKISHIRINMIPDGGISRVRLWGKIAKS</sequence>
<accession>B7ICG5</accession>
<evidence type="ECO:0000255" key="1">
    <source>
        <dbReference type="HAMAP-Rule" id="MF_00813"/>
    </source>
</evidence>
<dbReference type="EC" id="3.5.3.4" evidence="1"/>
<dbReference type="EMBL" id="CP001182">
    <property type="protein sequence ID" value="ACJ43159.1"/>
    <property type="molecule type" value="Genomic_DNA"/>
</dbReference>
<dbReference type="RefSeq" id="WP_000212411.1">
    <property type="nucleotide sequence ID" value="NC_011586.2"/>
</dbReference>
<dbReference type="SMR" id="B7ICG5"/>
<dbReference type="KEGG" id="abn:AB57_3807"/>
<dbReference type="HOGENOM" id="CLU_038797_1_2_6"/>
<dbReference type="UniPathway" id="UPA00395">
    <property type="reaction ID" value="UER00654"/>
</dbReference>
<dbReference type="Proteomes" id="UP000007094">
    <property type="component" value="Chromosome"/>
</dbReference>
<dbReference type="GO" id="GO:0004037">
    <property type="term" value="F:allantoicase activity"/>
    <property type="evidence" value="ECO:0007669"/>
    <property type="project" value="UniProtKB-UniRule"/>
</dbReference>
<dbReference type="GO" id="GO:0000256">
    <property type="term" value="P:allantoin catabolic process"/>
    <property type="evidence" value="ECO:0007669"/>
    <property type="project" value="UniProtKB-UniRule"/>
</dbReference>
<dbReference type="GO" id="GO:0006144">
    <property type="term" value="P:purine nucleobase metabolic process"/>
    <property type="evidence" value="ECO:0007669"/>
    <property type="project" value="UniProtKB-KW"/>
</dbReference>
<dbReference type="Gene3D" id="2.60.120.260">
    <property type="entry name" value="Galactose-binding domain-like"/>
    <property type="match status" value="2"/>
</dbReference>
<dbReference type="HAMAP" id="MF_00813">
    <property type="entry name" value="Allantoicase"/>
    <property type="match status" value="1"/>
</dbReference>
<dbReference type="InterPro" id="IPR005164">
    <property type="entry name" value="Allantoicase"/>
</dbReference>
<dbReference type="InterPro" id="IPR015908">
    <property type="entry name" value="Allantoicase_dom"/>
</dbReference>
<dbReference type="InterPro" id="IPR008979">
    <property type="entry name" value="Galactose-bd-like_sf"/>
</dbReference>
<dbReference type="NCBIfam" id="TIGR02961">
    <property type="entry name" value="allantoicase"/>
    <property type="match status" value="1"/>
</dbReference>
<dbReference type="PANTHER" id="PTHR12045">
    <property type="entry name" value="ALLANTOICASE"/>
    <property type="match status" value="1"/>
</dbReference>
<dbReference type="PANTHER" id="PTHR12045:SF3">
    <property type="entry name" value="INACTIVE ALLANTOICASE-RELATED"/>
    <property type="match status" value="1"/>
</dbReference>
<dbReference type="Pfam" id="PF03561">
    <property type="entry name" value="Allantoicase"/>
    <property type="match status" value="2"/>
</dbReference>
<dbReference type="PIRSF" id="PIRSF016516">
    <property type="entry name" value="Allantoicase"/>
    <property type="match status" value="1"/>
</dbReference>
<dbReference type="SUPFAM" id="SSF49785">
    <property type="entry name" value="Galactose-binding domain-like"/>
    <property type="match status" value="2"/>
</dbReference>
<proteinExistence type="inferred from homology"/>
<reference key="1">
    <citation type="journal article" date="2008" name="J. Bacteriol.">
        <title>Comparative genome sequence analysis of multidrug-resistant Acinetobacter baumannii.</title>
        <authorList>
            <person name="Adams M.D."/>
            <person name="Goglin K."/>
            <person name="Molyneaux N."/>
            <person name="Hujer K.M."/>
            <person name="Lavender H."/>
            <person name="Jamison J.J."/>
            <person name="MacDonald I.J."/>
            <person name="Martin K.M."/>
            <person name="Russo T."/>
            <person name="Campagnari A.A."/>
            <person name="Hujer A.M."/>
            <person name="Bonomo R.A."/>
            <person name="Gill S.R."/>
        </authorList>
    </citation>
    <scope>NUCLEOTIDE SEQUENCE [LARGE SCALE GENOMIC DNA]</scope>
    <source>
        <strain>AB0057</strain>
    </source>
</reference>
<feature type="chain" id="PRO_1000134085" description="Probable allantoicase">
    <location>
        <begin position="1"/>
        <end position="336"/>
    </location>
</feature>
<gene>
    <name evidence="1" type="primary">alc</name>
    <name type="ordered locus">AB57_3807</name>
</gene>
<name>ALLC_ACIB5</name>
<protein>
    <recommendedName>
        <fullName evidence="1">Probable allantoicase</fullName>
        <ecNumber evidence="1">3.5.3.4</ecNumber>
    </recommendedName>
    <alternativeName>
        <fullName evidence="1">Allantoate amidinohydrolase</fullName>
    </alternativeName>
</protein>
<comment type="catalytic activity">
    <reaction evidence="1">
        <text>allantoate + H2O = (S)-ureidoglycolate + urea</text>
        <dbReference type="Rhea" id="RHEA:11016"/>
        <dbReference type="ChEBI" id="CHEBI:15377"/>
        <dbReference type="ChEBI" id="CHEBI:16199"/>
        <dbReference type="ChEBI" id="CHEBI:17536"/>
        <dbReference type="ChEBI" id="CHEBI:57296"/>
        <dbReference type="EC" id="3.5.3.4"/>
    </reaction>
</comment>
<comment type="pathway">
    <text evidence="1">Nitrogen metabolism; (S)-allantoin degradation; (S)-ureidoglycolate from allantoate (aminidohydrolase route): step 1/1.</text>
</comment>
<comment type="similarity">
    <text evidence="1">Belongs to the allantoicase family.</text>
</comment>
<organism>
    <name type="scientific">Acinetobacter baumannii (strain AB0057)</name>
    <dbReference type="NCBI Taxonomy" id="480119"/>
    <lineage>
        <taxon>Bacteria</taxon>
        <taxon>Pseudomonadati</taxon>
        <taxon>Pseudomonadota</taxon>
        <taxon>Gammaproteobacteria</taxon>
        <taxon>Moraxellales</taxon>
        <taxon>Moraxellaceae</taxon>
        <taxon>Acinetobacter</taxon>
        <taxon>Acinetobacter calcoaceticus/baumannii complex</taxon>
    </lineage>
</organism>